<evidence type="ECO:0000255" key="1">
    <source>
        <dbReference type="HAMAP-Rule" id="MF_01815"/>
    </source>
</evidence>
<organism>
    <name type="scientific">Salmonella paratyphi B (strain ATCC BAA-1250 / SPB7)</name>
    <dbReference type="NCBI Taxonomy" id="1016998"/>
    <lineage>
        <taxon>Bacteria</taxon>
        <taxon>Pseudomonadati</taxon>
        <taxon>Pseudomonadota</taxon>
        <taxon>Gammaproteobacteria</taxon>
        <taxon>Enterobacterales</taxon>
        <taxon>Enterobacteriaceae</taxon>
        <taxon>Salmonella</taxon>
    </lineage>
</organism>
<comment type="function">
    <text evidence="1">Catalyzes the condensation reaction of fatty acid synthesis by the addition to an acyl acceptor of two carbons from malonyl-ACP. Catalyzes the first condensation reaction which initiates fatty acid synthesis and may therefore play a role in governing the total rate of fatty acid production. Possesses both acetoacetyl-ACP synthase and acetyl transacylase activities. Its substrate specificity determines the biosynthesis of branched-chain and/or straight-chain of fatty acids.</text>
</comment>
<comment type="catalytic activity">
    <reaction evidence="1">
        <text>malonyl-[ACP] + acetyl-CoA + H(+) = 3-oxobutanoyl-[ACP] + CO2 + CoA</text>
        <dbReference type="Rhea" id="RHEA:12080"/>
        <dbReference type="Rhea" id="RHEA-COMP:9623"/>
        <dbReference type="Rhea" id="RHEA-COMP:9625"/>
        <dbReference type="ChEBI" id="CHEBI:15378"/>
        <dbReference type="ChEBI" id="CHEBI:16526"/>
        <dbReference type="ChEBI" id="CHEBI:57287"/>
        <dbReference type="ChEBI" id="CHEBI:57288"/>
        <dbReference type="ChEBI" id="CHEBI:78449"/>
        <dbReference type="ChEBI" id="CHEBI:78450"/>
        <dbReference type="EC" id="2.3.1.180"/>
    </reaction>
</comment>
<comment type="pathway">
    <text evidence="1">Lipid metabolism; fatty acid biosynthesis.</text>
</comment>
<comment type="subunit">
    <text evidence="1">Homodimer.</text>
</comment>
<comment type="subcellular location">
    <subcellularLocation>
        <location evidence="1">Cytoplasm</location>
    </subcellularLocation>
</comment>
<comment type="domain">
    <text evidence="1">The last Arg residue of the ACP-binding site is essential for the weak association between ACP/AcpP and FabH.</text>
</comment>
<comment type="similarity">
    <text evidence="1">Belongs to the thiolase-like superfamily. FabH family.</text>
</comment>
<reference key="1">
    <citation type="submission" date="2007-11" db="EMBL/GenBank/DDBJ databases">
        <authorList>
            <consortium name="The Salmonella enterica serovar Paratyphi B Genome Sequencing Project"/>
            <person name="McClelland M."/>
            <person name="Sanderson E.K."/>
            <person name="Porwollik S."/>
            <person name="Spieth J."/>
            <person name="Clifton W.S."/>
            <person name="Fulton R."/>
            <person name="Cordes M."/>
            <person name="Wollam A."/>
            <person name="Shah N."/>
            <person name="Pepin K."/>
            <person name="Bhonagiri V."/>
            <person name="Nash W."/>
            <person name="Johnson M."/>
            <person name="Thiruvilangam P."/>
            <person name="Wilson R."/>
        </authorList>
    </citation>
    <scope>NUCLEOTIDE SEQUENCE [LARGE SCALE GENOMIC DNA]</scope>
    <source>
        <strain>ATCC BAA-1250 / SPB7</strain>
    </source>
</reference>
<sequence length="317" mass="33524">MYTKIIGTGSYLPEQVRTNADLEKMVETSDEWIVTRTGIRERHIAAPNETVATMGFTAANRAIEMAGIDKDQIGLIVVATTSATHAFPSAACQIQSMLGIKGCPAFDVAAACAGFTYALSIADQYVKSGAVKHALVVGSDVLARTCDPGDRGTIIIFGDGAGAAVLSASEEPGIISTHLHADGRYGELLTLPNADRVNPDNPIYLTMAGNEVFKVAVTELAHIVDETLAANNLDRSELDWLVPHQANLRIISATAKKLGMSMDNVVVTLDRHGNTSAASVPCALDEAVRDGRIKAGQLVLLEAFGGGFTWGSALIRF</sequence>
<feature type="chain" id="PRO_1000088323" description="Beta-ketoacyl-[acyl-carrier-protein] synthase III">
    <location>
        <begin position="1"/>
        <end position="317"/>
    </location>
</feature>
<feature type="region of interest" description="ACP-binding" evidence="1">
    <location>
        <begin position="245"/>
        <end position="249"/>
    </location>
</feature>
<feature type="active site" evidence="1">
    <location>
        <position position="112"/>
    </location>
</feature>
<feature type="active site" evidence="1">
    <location>
        <position position="244"/>
    </location>
</feature>
<feature type="active site" evidence="1">
    <location>
        <position position="274"/>
    </location>
</feature>
<name>FABH_SALPB</name>
<protein>
    <recommendedName>
        <fullName evidence="1">Beta-ketoacyl-[acyl-carrier-protein] synthase III</fullName>
        <shortName evidence="1">Beta-ketoacyl-ACP synthase III</shortName>
        <shortName evidence="1">KAS III</shortName>
        <ecNumber evidence="1">2.3.1.180</ecNumber>
    </recommendedName>
    <alternativeName>
        <fullName evidence="1">3-oxoacyl-[acyl-carrier-protein] synthase 3</fullName>
    </alternativeName>
    <alternativeName>
        <fullName evidence="1">3-oxoacyl-[acyl-carrier-protein] synthase III</fullName>
    </alternativeName>
</protein>
<accession>A9N5L3</accession>
<proteinExistence type="inferred from homology"/>
<keyword id="KW-0012">Acyltransferase</keyword>
<keyword id="KW-0963">Cytoplasm</keyword>
<keyword id="KW-0275">Fatty acid biosynthesis</keyword>
<keyword id="KW-0276">Fatty acid metabolism</keyword>
<keyword id="KW-0444">Lipid biosynthesis</keyword>
<keyword id="KW-0443">Lipid metabolism</keyword>
<keyword id="KW-0511">Multifunctional enzyme</keyword>
<keyword id="KW-0808">Transferase</keyword>
<dbReference type="EC" id="2.3.1.180" evidence="1"/>
<dbReference type="EMBL" id="CP000886">
    <property type="protein sequence ID" value="ABX67713.1"/>
    <property type="molecule type" value="Genomic_DNA"/>
</dbReference>
<dbReference type="RefSeq" id="WP_000288148.1">
    <property type="nucleotide sequence ID" value="NC_010102.1"/>
</dbReference>
<dbReference type="SMR" id="A9N5L3"/>
<dbReference type="KEGG" id="spq:SPAB_02330"/>
<dbReference type="PATRIC" id="fig|1016998.12.peg.2205"/>
<dbReference type="HOGENOM" id="CLU_039592_3_1_6"/>
<dbReference type="BioCyc" id="SENT1016998:SPAB_RS09485-MONOMER"/>
<dbReference type="UniPathway" id="UPA00094"/>
<dbReference type="Proteomes" id="UP000008556">
    <property type="component" value="Chromosome"/>
</dbReference>
<dbReference type="GO" id="GO:0005737">
    <property type="term" value="C:cytoplasm"/>
    <property type="evidence" value="ECO:0007669"/>
    <property type="project" value="UniProtKB-SubCell"/>
</dbReference>
<dbReference type="GO" id="GO:0004315">
    <property type="term" value="F:3-oxoacyl-[acyl-carrier-protein] synthase activity"/>
    <property type="evidence" value="ECO:0007669"/>
    <property type="project" value="InterPro"/>
</dbReference>
<dbReference type="GO" id="GO:0033818">
    <property type="term" value="F:beta-ketoacyl-acyl-carrier-protein synthase III activity"/>
    <property type="evidence" value="ECO:0007669"/>
    <property type="project" value="UniProtKB-UniRule"/>
</dbReference>
<dbReference type="GO" id="GO:0006633">
    <property type="term" value="P:fatty acid biosynthetic process"/>
    <property type="evidence" value="ECO:0007669"/>
    <property type="project" value="UniProtKB-UniRule"/>
</dbReference>
<dbReference type="CDD" id="cd00830">
    <property type="entry name" value="KAS_III"/>
    <property type="match status" value="1"/>
</dbReference>
<dbReference type="FunFam" id="3.40.47.10:FF:000004">
    <property type="entry name" value="3-oxoacyl-[acyl-carrier-protein] synthase 3"/>
    <property type="match status" value="1"/>
</dbReference>
<dbReference type="Gene3D" id="3.40.47.10">
    <property type="match status" value="1"/>
</dbReference>
<dbReference type="HAMAP" id="MF_01815">
    <property type="entry name" value="FabH"/>
    <property type="match status" value="1"/>
</dbReference>
<dbReference type="InterPro" id="IPR013747">
    <property type="entry name" value="ACP_syn_III_C"/>
</dbReference>
<dbReference type="InterPro" id="IPR013751">
    <property type="entry name" value="ACP_syn_III_N"/>
</dbReference>
<dbReference type="InterPro" id="IPR004655">
    <property type="entry name" value="FabH"/>
</dbReference>
<dbReference type="InterPro" id="IPR016039">
    <property type="entry name" value="Thiolase-like"/>
</dbReference>
<dbReference type="NCBIfam" id="TIGR00747">
    <property type="entry name" value="fabH"/>
    <property type="match status" value="1"/>
</dbReference>
<dbReference type="NCBIfam" id="NF006829">
    <property type="entry name" value="PRK09352.1"/>
    <property type="match status" value="1"/>
</dbReference>
<dbReference type="PANTHER" id="PTHR43091">
    <property type="entry name" value="3-OXOACYL-[ACYL-CARRIER-PROTEIN] SYNTHASE"/>
    <property type="match status" value="1"/>
</dbReference>
<dbReference type="PANTHER" id="PTHR43091:SF1">
    <property type="entry name" value="BETA-KETOACYL-[ACYL-CARRIER-PROTEIN] SYNTHASE III, CHLOROPLASTIC"/>
    <property type="match status" value="1"/>
</dbReference>
<dbReference type="Pfam" id="PF08545">
    <property type="entry name" value="ACP_syn_III"/>
    <property type="match status" value="1"/>
</dbReference>
<dbReference type="Pfam" id="PF08541">
    <property type="entry name" value="ACP_syn_III_C"/>
    <property type="match status" value="1"/>
</dbReference>
<dbReference type="SUPFAM" id="SSF53901">
    <property type="entry name" value="Thiolase-like"/>
    <property type="match status" value="1"/>
</dbReference>
<gene>
    <name evidence="1" type="primary">fabH</name>
    <name type="ordered locus">SPAB_02330</name>
</gene>